<organism>
    <name type="scientific">Yersinia pestis bv. Antiqua (strain Antiqua)</name>
    <dbReference type="NCBI Taxonomy" id="360102"/>
    <lineage>
        <taxon>Bacteria</taxon>
        <taxon>Pseudomonadati</taxon>
        <taxon>Pseudomonadota</taxon>
        <taxon>Gammaproteobacteria</taxon>
        <taxon>Enterobacterales</taxon>
        <taxon>Yersiniaceae</taxon>
        <taxon>Yersinia</taxon>
    </lineage>
</organism>
<comment type="function">
    <text evidence="1">Catalyzes the NAD-dependent reduction of succinylglutamate semialdehyde into succinylglutamate.</text>
</comment>
<comment type="catalytic activity">
    <reaction evidence="1">
        <text>N-succinyl-L-glutamate 5-semialdehyde + NAD(+) + H2O = N-succinyl-L-glutamate + NADH + 2 H(+)</text>
        <dbReference type="Rhea" id="RHEA:10812"/>
        <dbReference type="ChEBI" id="CHEBI:15377"/>
        <dbReference type="ChEBI" id="CHEBI:15378"/>
        <dbReference type="ChEBI" id="CHEBI:57540"/>
        <dbReference type="ChEBI" id="CHEBI:57945"/>
        <dbReference type="ChEBI" id="CHEBI:58520"/>
        <dbReference type="ChEBI" id="CHEBI:58763"/>
        <dbReference type="EC" id="1.2.1.71"/>
    </reaction>
</comment>
<comment type="pathway">
    <text evidence="1">Amino-acid degradation; L-arginine degradation via AST pathway; L-glutamate and succinate from L-arginine: step 4/5.</text>
</comment>
<comment type="similarity">
    <text evidence="1">Belongs to the aldehyde dehydrogenase family. AstD subfamily.</text>
</comment>
<accession>Q1C8A9</accession>
<proteinExistence type="inferred from homology"/>
<reference key="1">
    <citation type="journal article" date="2006" name="J. Bacteriol.">
        <title>Complete genome sequence of Yersinia pestis strains Antiqua and Nepal516: evidence of gene reduction in an emerging pathogen.</title>
        <authorList>
            <person name="Chain P.S.G."/>
            <person name="Hu P."/>
            <person name="Malfatti S.A."/>
            <person name="Radnedge L."/>
            <person name="Larimer F."/>
            <person name="Vergez L.M."/>
            <person name="Worsham P."/>
            <person name="Chu M.C."/>
            <person name="Andersen G.L."/>
        </authorList>
    </citation>
    <scope>NUCLEOTIDE SEQUENCE [LARGE SCALE GENOMIC DNA]</scope>
    <source>
        <strain>Antiqua</strain>
    </source>
</reference>
<keyword id="KW-0056">Arginine metabolism</keyword>
<keyword id="KW-0520">NAD</keyword>
<keyword id="KW-0560">Oxidoreductase</keyword>
<name>ASTD_YERPA</name>
<dbReference type="EC" id="1.2.1.71" evidence="1"/>
<dbReference type="EMBL" id="CP000308">
    <property type="protein sequence ID" value="ABG13313.1"/>
    <property type="molecule type" value="Genomic_DNA"/>
</dbReference>
<dbReference type="RefSeq" id="WP_002212030.1">
    <property type="nucleotide sequence ID" value="NZ_CP009906.1"/>
</dbReference>
<dbReference type="SMR" id="Q1C8A9"/>
<dbReference type="KEGG" id="ypa:YPA_1346"/>
<dbReference type="UniPathway" id="UPA00185">
    <property type="reaction ID" value="UER00282"/>
</dbReference>
<dbReference type="Proteomes" id="UP000001971">
    <property type="component" value="Chromosome"/>
</dbReference>
<dbReference type="GO" id="GO:0043824">
    <property type="term" value="F:succinylglutamate-semialdehyde dehydrogenase activity"/>
    <property type="evidence" value="ECO:0007669"/>
    <property type="project" value="UniProtKB-EC"/>
</dbReference>
<dbReference type="GO" id="GO:0019544">
    <property type="term" value="P:arginine catabolic process to glutamate"/>
    <property type="evidence" value="ECO:0007669"/>
    <property type="project" value="UniProtKB-UniRule"/>
</dbReference>
<dbReference type="GO" id="GO:0019545">
    <property type="term" value="P:arginine catabolic process to succinate"/>
    <property type="evidence" value="ECO:0007669"/>
    <property type="project" value="UniProtKB-UniRule"/>
</dbReference>
<dbReference type="CDD" id="cd07095">
    <property type="entry name" value="ALDH_SGSD_AstD"/>
    <property type="match status" value="1"/>
</dbReference>
<dbReference type="FunFam" id="3.40.309.10:FF:000013">
    <property type="entry name" value="N-succinylglutamate 5-semialdehyde dehydrogenase"/>
    <property type="match status" value="1"/>
</dbReference>
<dbReference type="FunFam" id="3.40.605.10:FF:000010">
    <property type="entry name" value="N-succinylglutamate 5-semialdehyde dehydrogenase"/>
    <property type="match status" value="1"/>
</dbReference>
<dbReference type="Gene3D" id="3.40.605.10">
    <property type="entry name" value="Aldehyde Dehydrogenase, Chain A, domain 1"/>
    <property type="match status" value="1"/>
</dbReference>
<dbReference type="Gene3D" id="3.40.309.10">
    <property type="entry name" value="Aldehyde Dehydrogenase, Chain A, domain 2"/>
    <property type="match status" value="1"/>
</dbReference>
<dbReference type="HAMAP" id="MF_01174">
    <property type="entry name" value="Aldedh_AstD"/>
    <property type="match status" value="1"/>
</dbReference>
<dbReference type="InterPro" id="IPR016161">
    <property type="entry name" value="Ald_DH/histidinol_DH"/>
</dbReference>
<dbReference type="InterPro" id="IPR016163">
    <property type="entry name" value="Ald_DH_C"/>
</dbReference>
<dbReference type="InterPro" id="IPR016160">
    <property type="entry name" value="Ald_DH_CS_CYS"/>
</dbReference>
<dbReference type="InterPro" id="IPR029510">
    <property type="entry name" value="Ald_DH_CS_GLU"/>
</dbReference>
<dbReference type="InterPro" id="IPR016162">
    <property type="entry name" value="Ald_DH_N"/>
</dbReference>
<dbReference type="InterPro" id="IPR015590">
    <property type="entry name" value="Aldehyde_DH_dom"/>
</dbReference>
<dbReference type="InterPro" id="IPR017649">
    <property type="entry name" value="SuccinylGlu_semiald_DH_AstD"/>
</dbReference>
<dbReference type="NCBIfam" id="TIGR03240">
    <property type="entry name" value="arg_catab_astD"/>
    <property type="match status" value="1"/>
</dbReference>
<dbReference type="NCBIfam" id="NF006992">
    <property type="entry name" value="PRK09457.1"/>
    <property type="match status" value="1"/>
</dbReference>
<dbReference type="PANTHER" id="PTHR11699">
    <property type="entry name" value="ALDEHYDE DEHYDROGENASE-RELATED"/>
    <property type="match status" value="1"/>
</dbReference>
<dbReference type="Pfam" id="PF00171">
    <property type="entry name" value="Aldedh"/>
    <property type="match status" value="1"/>
</dbReference>
<dbReference type="SUPFAM" id="SSF53720">
    <property type="entry name" value="ALDH-like"/>
    <property type="match status" value="1"/>
</dbReference>
<dbReference type="PROSITE" id="PS00070">
    <property type="entry name" value="ALDEHYDE_DEHYDR_CYS"/>
    <property type="match status" value="1"/>
</dbReference>
<dbReference type="PROSITE" id="PS00687">
    <property type="entry name" value="ALDEHYDE_DEHYDR_GLU"/>
    <property type="match status" value="1"/>
</dbReference>
<sequence length="505" mass="54765">MSQHVMFNAVLSSHPALFIQGEWRIGNGVSFEKQDPMSQQRLWQARAADHTDVTLACHAARAAFPAWARASLEQRATVIQQFAALLEQHKQSLARTISLETSKPYWETLTEVQAMIGKVAISLQAYQTRTGHSQTPMGDSMSVLRHRPHGVLAVFGPYNFPGHLPNGHIVPALLAGNTVVFKPSELTPWTAEETVKLWQQAGIPDGVLNLVQGGRETGEALAAQPDIDGLLFTGSAHTGYHLHRQLAGQPEKMLALEMGGNNALIVEQVKDRDAVVNLAIQSAFISAGQRCTCSRRLLVKTGAEGDAFLLRFTAVAQALRIGRWDEQPAPFMGAVISSQAAERMLAAQQHLLLLGGESLLNMTRPDSQSALLTPGIIDITNISEVPDEEYFGPLVSVIRYTDFTEALKIANQTRFGLAVGLVSEDRQQFEQLLLEARAGIVNWNKPLTGASSAAPFGGVGASGNHRPSAFYAADYCAWPMASLECEHLTLPATLSPGISFDLPKV</sequence>
<gene>
    <name evidence="1" type="primary">astD</name>
    <name type="ordered locus">YPA_1346</name>
</gene>
<evidence type="ECO:0000255" key="1">
    <source>
        <dbReference type="HAMAP-Rule" id="MF_01174"/>
    </source>
</evidence>
<protein>
    <recommendedName>
        <fullName evidence="1">N-succinylglutamate 5-semialdehyde dehydrogenase</fullName>
        <ecNumber evidence="1">1.2.1.71</ecNumber>
    </recommendedName>
    <alternativeName>
        <fullName evidence="1">Succinylglutamic semialdehyde dehydrogenase</fullName>
        <shortName evidence="1">SGSD</shortName>
    </alternativeName>
</protein>
<feature type="chain" id="PRO_0000262437" description="N-succinylglutamate 5-semialdehyde dehydrogenase">
    <location>
        <begin position="1"/>
        <end position="505"/>
    </location>
</feature>
<feature type="active site" evidence="1">
    <location>
        <position position="257"/>
    </location>
</feature>
<feature type="active site" evidence="1">
    <location>
        <position position="291"/>
    </location>
</feature>
<feature type="binding site" evidence="1">
    <location>
        <begin position="234"/>
        <end position="239"/>
    </location>
    <ligand>
        <name>NAD(+)</name>
        <dbReference type="ChEBI" id="CHEBI:57540"/>
    </ligand>
</feature>